<comment type="cofactor">
    <cofactor evidence="1">
        <name>Zn(2+)</name>
        <dbReference type="ChEBI" id="CHEBI:29105"/>
    </cofactor>
    <text evidence="1">Binds 2 Zn(2+) ions per subunit.</text>
</comment>
<comment type="subcellular location">
    <subcellularLocation>
        <location evidence="3">Secreted</location>
    </subcellularLocation>
</comment>
<comment type="similarity">
    <text evidence="3">Belongs to the peptidase M20A family.</text>
</comment>
<organism>
    <name type="scientific">Uncinocarpus reesii (strain UAMH 1704)</name>
    <dbReference type="NCBI Taxonomy" id="336963"/>
    <lineage>
        <taxon>Eukaryota</taxon>
        <taxon>Fungi</taxon>
        <taxon>Dikarya</taxon>
        <taxon>Ascomycota</taxon>
        <taxon>Pezizomycotina</taxon>
        <taxon>Eurotiomycetes</taxon>
        <taxon>Eurotiomycetidae</taxon>
        <taxon>Onygenales</taxon>
        <taxon>Onygenaceae</taxon>
        <taxon>Uncinocarpus</taxon>
    </lineage>
</organism>
<accession>C4JXT1</accession>
<protein>
    <recommendedName>
        <fullName>Probable carboxypeptidase UREG_07869</fullName>
        <ecNumber>3.4.17.-</ecNumber>
    </recommendedName>
    <alternativeName>
        <fullName>Peptidase M20 domain-containing protein UREG_07869</fullName>
    </alternativeName>
</protein>
<feature type="signal peptide" evidence="2">
    <location>
        <begin position="1"/>
        <end position="17"/>
    </location>
</feature>
<feature type="chain" id="PRO_0000411242" description="Probable carboxypeptidase UREG_07869">
    <location>
        <begin position="18"/>
        <end position="445"/>
    </location>
</feature>
<feature type="active site" description="Proton acceptor" evidence="1">
    <location>
        <position position="197"/>
    </location>
</feature>
<feature type="binding site" evidence="1">
    <location>
        <position position="165"/>
    </location>
    <ligand>
        <name>Zn(2+)</name>
        <dbReference type="ChEBI" id="CHEBI:29105"/>
        <label>1</label>
    </ligand>
</feature>
<feature type="binding site" evidence="1">
    <location>
        <position position="165"/>
    </location>
    <ligand>
        <name>Zn(2+)</name>
        <dbReference type="ChEBI" id="CHEBI:29105"/>
        <label>2</label>
    </ligand>
</feature>
<feature type="binding site" evidence="1">
    <location>
        <position position="198"/>
    </location>
    <ligand>
        <name>Zn(2+)</name>
        <dbReference type="ChEBI" id="CHEBI:29105"/>
        <label>1</label>
    </ligand>
</feature>
<evidence type="ECO:0000250" key="1"/>
<evidence type="ECO:0000255" key="2"/>
<evidence type="ECO:0000305" key="3"/>
<dbReference type="EC" id="3.4.17.-"/>
<dbReference type="EMBL" id="CH476619">
    <property type="protein sequence ID" value="EEP83004.1"/>
    <property type="molecule type" value="Genomic_DNA"/>
</dbReference>
<dbReference type="RefSeq" id="XP_002583096.1">
    <property type="nucleotide sequence ID" value="XM_002583050.1"/>
</dbReference>
<dbReference type="SMR" id="C4JXT1"/>
<dbReference type="STRING" id="336963.C4JXT1"/>
<dbReference type="GeneID" id="8440320"/>
<dbReference type="KEGG" id="ure:UREG_07869"/>
<dbReference type="VEuPathDB" id="FungiDB:UREG_07869"/>
<dbReference type="eggNOG" id="KOG2275">
    <property type="taxonomic scope" value="Eukaryota"/>
</dbReference>
<dbReference type="HOGENOM" id="CLU_021802_3_0_1"/>
<dbReference type="InParanoid" id="C4JXT1"/>
<dbReference type="OMA" id="CHICFRT"/>
<dbReference type="OrthoDB" id="3064516at2759"/>
<dbReference type="Proteomes" id="UP000002058">
    <property type="component" value="Unassembled WGS sequence"/>
</dbReference>
<dbReference type="GO" id="GO:0005576">
    <property type="term" value="C:extracellular region"/>
    <property type="evidence" value="ECO:0007669"/>
    <property type="project" value="UniProtKB-SubCell"/>
</dbReference>
<dbReference type="GO" id="GO:0046872">
    <property type="term" value="F:metal ion binding"/>
    <property type="evidence" value="ECO:0007669"/>
    <property type="project" value="UniProtKB-KW"/>
</dbReference>
<dbReference type="GO" id="GO:0008233">
    <property type="term" value="F:peptidase activity"/>
    <property type="evidence" value="ECO:0007669"/>
    <property type="project" value="UniProtKB-KW"/>
</dbReference>
<dbReference type="GO" id="GO:0006508">
    <property type="term" value="P:proteolysis"/>
    <property type="evidence" value="ECO:0007669"/>
    <property type="project" value="UniProtKB-KW"/>
</dbReference>
<dbReference type="CDD" id="cd05652">
    <property type="entry name" value="M20_ArgE_DapE-like_fungal"/>
    <property type="match status" value="1"/>
</dbReference>
<dbReference type="Gene3D" id="3.30.70.360">
    <property type="match status" value="1"/>
</dbReference>
<dbReference type="Gene3D" id="3.40.630.10">
    <property type="entry name" value="Zn peptidases"/>
    <property type="match status" value="1"/>
</dbReference>
<dbReference type="InterPro" id="IPR001261">
    <property type="entry name" value="ArgE/DapE_CS"/>
</dbReference>
<dbReference type="InterPro" id="IPR036264">
    <property type="entry name" value="Bact_exopeptidase_dim_dom"/>
</dbReference>
<dbReference type="InterPro" id="IPR002933">
    <property type="entry name" value="Peptidase_M20"/>
</dbReference>
<dbReference type="InterPro" id="IPR011650">
    <property type="entry name" value="Peptidase_M20_dimer"/>
</dbReference>
<dbReference type="InterPro" id="IPR050072">
    <property type="entry name" value="Peptidase_M20A"/>
</dbReference>
<dbReference type="PANTHER" id="PTHR43808">
    <property type="entry name" value="ACETYLORNITHINE DEACETYLASE"/>
    <property type="match status" value="1"/>
</dbReference>
<dbReference type="PANTHER" id="PTHR43808:SF8">
    <property type="entry name" value="PEPTIDASE M20 DIMERISATION DOMAIN-CONTAINING PROTEIN"/>
    <property type="match status" value="1"/>
</dbReference>
<dbReference type="Pfam" id="PF07687">
    <property type="entry name" value="M20_dimer"/>
    <property type="match status" value="1"/>
</dbReference>
<dbReference type="Pfam" id="PF01546">
    <property type="entry name" value="Peptidase_M20"/>
    <property type="match status" value="1"/>
</dbReference>
<dbReference type="SUPFAM" id="SSF55031">
    <property type="entry name" value="Bacterial exopeptidase dimerisation domain"/>
    <property type="match status" value="1"/>
</dbReference>
<dbReference type="SUPFAM" id="SSF53187">
    <property type="entry name" value="Zn-dependent exopeptidases"/>
    <property type="match status" value="1"/>
</dbReference>
<dbReference type="PROSITE" id="PS00759">
    <property type="entry name" value="ARGE_DAPE_CPG2_2"/>
    <property type="match status" value="1"/>
</dbReference>
<sequence length="445" mass="48226">MKSLILTTLALLPLVSCKPWVQLSHQTPISADRNLIPGAAEKSQLDKIIADSELLSLHRSLTEIESISSREGDVGDFLVDYLQKHGFTVEKQHVSSDGNEADKMKPSSFNVYAYPRSSPAPEIILTSHIDTVPPFIPYSLSLPKSSSTGSIDRRAIHISGRGTVDDKGSVACQIIAILSHLKSHPDARLGLLFVVGEETGGQGMHHFSRSPLNTSPPTFHTVIFGEPTENKLVSGHKGMLQFTVSVHGKPAHSGYPWLGRSAVSEILPILSKIDQLGDIPESEGGLPSSEKYGKTTLNIGFMEGGVATNVVPARAFARVAVRLAGGTVEQAKERITAAVRSASREYRADVRLWFFSGGGYPPIDLDTDVEGFDILAVNYGTDVPNLMIHDHDQPEDKKVKRYLYGPGSIFSAHGENEGLSVGDMEDAVEGYGRLIRAAVERGQRK</sequence>
<proteinExistence type="inferred from homology"/>
<keyword id="KW-0378">Hydrolase</keyword>
<keyword id="KW-0479">Metal-binding</keyword>
<keyword id="KW-0645">Protease</keyword>
<keyword id="KW-1185">Reference proteome</keyword>
<keyword id="KW-0964">Secreted</keyword>
<keyword id="KW-0732">Signal</keyword>
<keyword id="KW-0862">Zinc</keyword>
<name>P20D1_UNCRE</name>
<reference key="1">
    <citation type="journal article" date="2009" name="Genome Res.">
        <title>Comparative genomic analyses of the human fungal pathogens Coccidioides and their relatives.</title>
        <authorList>
            <person name="Sharpton T.J."/>
            <person name="Stajich J.E."/>
            <person name="Rounsley S.D."/>
            <person name="Gardner M.J."/>
            <person name="Wortman J.R."/>
            <person name="Jordar V.S."/>
            <person name="Maiti R."/>
            <person name="Kodira C.D."/>
            <person name="Neafsey D.E."/>
            <person name="Zeng Q."/>
            <person name="Hung C.-Y."/>
            <person name="McMahan C."/>
            <person name="Muszewska A."/>
            <person name="Grynberg M."/>
            <person name="Mandel M.A."/>
            <person name="Kellner E.M."/>
            <person name="Barker B.M."/>
            <person name="Galgiani J.N."/>
            <person name="Orbach M.J."/>
            <person name="Kirkland T.N."/>
            <person name="Cole G.T."/>
            <person name="Henn M.R."/>
            <person name="Birren B.W."/>
            <person name="Taylor J.W."/>
        </authorList>
    </citation>
    <scope>NUCLEOTIDE SEQUENCE [LARGE SCALE GENOMIC DNA]</scope>
    <source>
        <strain>UAMH 1704</strain>
    </source>
</reference>
<gene>
    <name type="ORF">UREG_07869</name>
</gene>